<protein>
    <recommendedName>
        <fullName evidence="1">Macrolide export ATP-binding/permease protein MacB</fullName>
        <ecNumber evidence="1">7.6.2.-</ecNumber>
    </recommendedName>
</protein>
<name>MACB_PASMU</name>
<sequence>MMNQPLIELKNIVRRYGHGDTETTVLKSINLKIYAGEMVAIVGASGSGKSTLMNLLGVLDQADDGEYLFRGRQISTLSSDELADLRCYHFGFVFQRYHLLPHLTAVENVEIPAIYSAMEKEKRIERAQKLLCRLGLENQLKHKPSQLSGGQQQRVSIARALMNGGEIILADEPTGALDSQSSQEVLSVLKTLNHQGHTVVLITHDMQIASHADRIITMKDGEIIADSGVTQNLMKSSAQEVTPQLSSMHYLATLRRYHAAFLMAMHMMFAHKIRTLLTMLGIIIGIAAVVCVIALGEGAKNKVLAEFSALGNNTIDIYPGKNWGDPDAIKIQTLNQVDLALLRQQPYLKGATPQISVDLPLRFLNRTVNASVYGVSDAFFQLRKHRLLSGRWFNAHDMATHQAVSVIDKKSQQVIFGTESAVGKTVFIGQIPILIVGVVETPPQNIEGQRATIWLPYNTVVSRLYNQSYFQQITVQVKEHIAPDLAEKAIIDLLTIQHGRKDFFTFSSRKFLQSLQRTTQTLTMMISSIAFISLVVGGIGVMNIMLVSVIERTREIGIRVAVGAKEKDILHQFLIESASVSLLGGMLGVLLSLLLGGLFSAFTDSIKMQFTFSSFLIAFVCSSMIGMIFGYFPARNAARLKPVVALSQE</sequence>
<reference key="1">
    <citation type="journal article" date="2001" name="Proc. Natl. Acad. Sci. U.S.A.">
        <title>Complete genomic sequence of Pasteurella multocida Pm70.</title>
        <authorList>
            <person name="May B.J."/>
            <person name="Zhang Q."/>
            <person name="Li L.L."/>
            <person name="Paustian M.L."/>
            <person name="Whittam T.S."/>
            <person name="Kapur V."/>
        </authorList>
    </citation>
    <scope>NUCLEOTIDE SEQUENCE [LARGE SCALE GENOMIC DNA]</scope>
    <source>
        <strain>Pm70</strain>
    </source>
</reference>
<accession>Q9CM47</accession>
<gene>
    <name evidence="1" type="primary">macB</name>
    <name type="ordered locus">PM0996</name>
</gene>
<feature type="chain" id="PRO_0000269953" description="Macrolide export ATP-binding/permease protein MacB">
    <location>
        <begin position="1"/>
        <end position="649"/>
    </location>
</feature>
<feature type="transmembrane region" description="Helical" evidence="1">
    <location>
        <begin position="276"/>
        <end position="296"/>
    </location>
</feature>
<feature type="transmembrane region" description="Helical" evidence="1">
    <location>
        <begin position="529"/>
        <end position="549"/>
    </location>
</feature>
<feature type="transmembrane region" description="Helical" evidence="1">
    <location>
        <begin position="582"/>
        <end position="602"/>
    </location>
</feature>
<feature type="transmembrane region" description="Helical" evidence="1">
    <location>
        <begin position="612"/>
        <end position="632"/>
    </location>
</feature>
<feature type="domain" description="ABC transporter" evidence="1">
    <location>
        <begin position="7"/>
        <end position="245"/>
    </location>
</feature>
<feature type="binding site" evidence="1">
    <location>
        <begin position="43"/>
        <end position="50"/>
    </location>
    <ligand>
        <name>ATP</name>
        <dbReference type="ChEBI" id="CHEBI:30616"/>
    </ligand>
</feature>
<organism>
    <name type="scientific">Pasteurella multocida (strain Pm70)</name>
    <dbReference type="NCBI Taxonomy" id="272843"/>
    <lineage>
        <taxon>Bacteria</taxon>
        <taxon>Pseudomonadati</taxon>
        <taxon>Pseudomonadota</taxon>
        <taxon>Gammaproteobacteria</taxon>
        <taxon>Pasteurellales</taxon>
        <taxon>Pasteurellaceae</taxon>
        <taxon>Pasteurella</taxon>
    </lineage>
</organism>
<keyword id="KW-0046">Antibiotic resistance</keyword>
<keyword id="KW-0067">ATP-binding</keyword>
<keyword id="KW-0997">Cell inner membrane</keyword>
<keyword id="KW-1003">Cell membrane</keyword>
<keyword id="KW-0472">Membrane</keyword>
<keyword id="KW-0547">Nucleotide-binding</keyword>
<keyword id="KW-1185">Reference proteome</keyword>
<keyword id="KW-1278">Translocase</keyword>
<keyword id="KW-0812">Transmembrane</keyword>
<keyword id="KW-1133">Transmembrane helix</keyword>
<keyword id="KW-0813">Transport</keyword>
<proteinExistence type="inferred from homology"/>
<evidence type="ECO:0000255" key="1">
    <source>
        <dbReference type="HAMAP-Rule" id="MF_01720"/>
    </source>
</evidence>
<comment type="function">
    <text evidence="1">Part of the tripartite efflux system MacAB-TolC. MacB is a non-canonical ABC transporter that contains transmembrane domains (TMD), which form a pore in the inner membrane, and an ATP-binding domain (NBD), which is responsible for energy generation. Confers resistance against macrolides.</text>
</comment>
<comment type="subunit">
    <text evidence="1">Homodimer. Part of the tripartite efflux system MacAB-TolC, which is composed of an inner membrane transporter, MacB, a periplasmic membrane fusion protein, MacA, and an outer membrane component, TolC. The complex forms a large protein conduit and can translocate molecules across both the inner and outer membranes. Interacts with MacA.</text>
</comment>
<comment type="subcellular location">
    <subcellularLocation>
        <location evidence="1">Cell inner membrane</location>
        <topology evidence="1">Multi-pass membrane protein</topology>
    </subcellularLocation>
</comment>
<comment type="similarity">
    <text evidence="1">Belongs to the ABC transporter superfamily. Macrolide exporter (TC 3.A.1.122) family.</text>
</comment>
<dbReference type="EC" id="7.6.2.-" evidence="1"/>
<dbReference type="EMBL" id="AE004439">
    <property type="protein sequence ID" value="AAK03080.1"/>
    <property type="molecule type" value="Genomic_DNA"/>
</dbReference>
<dbReference type="SMR" id="Q9CM47"/>
<dbReference type="STRING" id="272843.PM0996"/>
<dbReference type="EnsemblBacteria" id="AAK03080">
    <property type="protein sequence ID" value="AAK03080"/>
    <property type="gene ID" value="PM0996"/>
</dbReference>
<dbReference type="KEGG" id="pmu:PM0996"/>
<dbReference type="HOGENOM" id="CLU_000604_78_2_6"/>
<dbReference type="Proteomes" id="UP000000809">
    <property type="component" value="Chromosome"/>
</dbReference>
<dbReference type="GO" id="GO:0005886">
    <property type="term" value="C:plasma membrane"/>
    <property type="evidence" value="ECO:0007669"/>
    <property type="project" value="UniProtKB-SubCell"/>
</dbReference>
<dbReference type="GO" id="GO:0005524">
    <property type="term" value="F:ATP binding"/>
    <property type="evidence" value="ECO:0007669"/>
    <property type="project" value="UniProtKB-KW"/>
</dbReference>
<dbReference type="GO" id="GO:0016887">
    <property type="term" value="F:ATP hydrolysis activity"/>
    <property type="evidence" value="ECO:0007669"/>
    <property type="project" value="InterPro"/>
</dbReference>
<dbReference type="GO" id="GO:0022857">
    <property type="term" value="F:transmembrane transporter activity"/>
    <property type="evidence" value="ECO:0007669"/>
    <property type="project" value="TreeGrafter"/>
</dbReference>
<dbReference type="GO" id="GO:0046677">
    <property type="term" value="P:response to antibiotic"/>
    <property type="evidence" value="ECO:0007669"/>
    <property type="project" value="UniProtKB-KW"/>
</dbReference>
<dbReference type="CDD" id="cd03255">
    <property type="entry name" value="ABC_MJ0796_LolCDE_FtsE"/>
    <property type="match status" value="1"/>
</dbReference>
<dbReference type="FunFam" id="3.40.50.300:FF:000032">
    <property type="entry name" value="Export ABC transporter ATP-binding protein"/>
    <property type="match status" value="1"/>
</dbReference>
<dbReference type="Gene3D" id="3.40.50.300">
    <property type="entry name" value="P-loop containing nucleotide triphosphate hydrolases"/>
    <property type="match status" value="1"/>
</dbReference>
<dbReference type="InterPro" id="IPR003593">
    <property type="entry name" value="AAA+_ATPase"/>
</dbReference>
<dbReference type="InterPro" id="IPR003838">
    <property type="entry name" value="ABC3_permease_C"/>
</dbReference>
<dbReference type="InterPro" id="IPR003439">
    <property type="entry name" value="ABC_transporter-like_ATP-bd"/>
</dbReference>
<dbReference type="InterPro" id="IPR017871">
    <property type="entry name" value="ABC_transporter-like_CS"/>
</dbReference>
<dbReference type="InterPro" id="IPR017911">
    <property type="entry name" value="MacB-like_ATP-bd"/>
</dbReference>
<dbReference type="InterPro" id="IPR025857">
    <property type="entry name" value="MacB_PCD"/>
</dbReference>
<dbReference type="InterPro" id="IPR050250">
    <property type="entry name" value="Macrolide_Exporter_MacB"/>
</dbReference>
<dbReference type="InterPro" id="IPR027417">
    <property type="entry name" value="P-loop_NTPase"/>
</dbReference>
<dbReference type="PANTHER" id="PTHR30572:SF14">
    <property type="entry name" value="MACROLIDE EXPORT ATP-BINDING_PERMEASE PROTEIN MACB"/>
    <property type="match status" value="1"/>
</dbReference>
<dbReference type="PANTHER" id="PTHR30572">
    <property type="entry name" value="MEMBRANE COMPONENT OF TRANSPORTER-RELATED"/>
    <property type="match status" value="1"/>
</dbReference>
<dbReference type="Pfam" id="PF00005">
    <property type="entry name" value="ABC_tran"/>
    <property type="match status" value="1"/>
</dbReference>
<dbReference type="Pfam" id="PF02687">
    <property type="entry name" value="FtsX"/>
    <property type="match status" value="1"/>
</dbReference>
<dbReference type="Pfam" id="PF12704">
    <property type="entry name" value="MacB_PCD"/>
    <property type="match status" value="1"/>
</dbReference>
<dbReference type="SMART" id="SM00382">
    <property type="entry name" value="AAA"/>
    <property type="match status" value="1"/>
</dbReference>
<dbReference type="SUPFAM" id="SSF52540">
    <property type="entry name" value="P-loop containing nucleoside triphosphate hydrolases"/>
    <property type="match status" value="1"/>
</dbReference>
<dbReference type="PROSITE" id="PS00211">
    <property type="entry name" value="ABC_TRANSPORTER_1"/>
    <property type="match status" value="1"/>
</dbReference>
<dbReference type="PROSITE" id="PS50893">
    <property type="entry name" value="ABC_TRANSPORTER_2"/>
    <property type="match status" value="1"/>
</dbReference>
<dbReference type="PROSITE" id="PS51267">
    <property type="entry name" value="MACB"/>
    <property type="match status" value="1"/>
</dbReference>